<keyword id="KW-0143">Chaperone</keyword>
<keyword id="KW-0175">Coiled coil</keyword>
<keyword id="KW-0963">Cytoplasm</keyword>
<keyword id="KW-0597">Phosphoprotein</keyword>
<keyword id="KW-1185">Reference proteome</keyword>
<proteinExistence type="evidence at transcript level"/>
<accession>Q5RA87</accession>
<comment type="function">
    <text evidence="1">Co-chaperone that binds to numerous proteins and promotes their interaction with Hsp70 and Hsp90.</text>
</comment>
<comment type="subunit">
    <text evidence="1">Self-associates. Forms complexes with Hsp70 and Hsp90. Interacts with CDC37, FKBP4, PPID and STIP1.</text>
</comment>
<comment type="subcellular location">
    <subcellularLocation>
        <location evidence="1">Cytoplasm</location>
    </subcellularLocation>
</comment>
<comment type="similarity">
    <text evidence="5">Belongs to the CDC37 family.</text>
</comment>
<organism>
    <name type="scientific">Pongo abelii</name>
    <name type="common">Sumatran orangutan</name>
    <name type="synonym">Pongo pygmaeus abelii</name>
    <dbReference type="NCBI Taxonomy" id="9601"/>
    <lineage>
        <taxon>Eukaryota</taxon>
        <taxon>Metazoa</taxon>
        <taxon>Chordata</taxon>
        <taxon>Craniata</taxon>
        <taxon>Vertebrata</taxon>
        <taxon>Euteleostomi</taxon>
        <taxon>Mammalia</taxon>
        <taxon>Eutheria</taxon>
        <taxon>Euarchontoglires</taxon>
        <taxon>Primates</taxon>
        <taxon>Haplorrhini</taxon>
        <taxon>Catarrhini</taxon>
        <taxon>Hominidae</taxon>
        <taxon>Pongo</taxon>
    </lineage>
</organism>
<protein>
    <recommendedName>
        <fullName>Hsp90 co-chaperone Cdc37-like 1</fullName>
    </recommendedName>
</protein>
<gene>
    <name type="primary">CDC37L1</name>
</gene>
<name>CD37L_PONAB</name>
<reference key="1">
    <citation type="submission" date="2004-11" db="EMBL/GenBank/DDBJ databases">
        <authorList>
            <consortium name="The German cDNA consortium"/>
        </authorList>
    </citation>
    <scope>NUCLEOTIDE SEQUENCE [LARGE SCALE MRNA]</scope>
    <source>
        <tissue>Heart</tissue>
    </source>
</reference>
<evidence type="ECO:0000250" key="1"/>
<evidence type="ECO:0000250" key="2">
    <source>
        <dbReference type="UniProtKB" id="Q7L3B6"/>
    </source>
</evidence>
<evidence type="ECO:0000255" key="3"/>
<evidence type="ECO:0000256" key="4">
    <source>
        <dbReference type="SAM" id="MobiDB-lite"/>
    </source>
</evidence>
<evidence type="ECO:0000305" key="5"/>
<sequence>MEQPWPPPGPWSLPRAEGEAEEENDLDVFPSSPRCPQLPGGSAQMYSHGIELACQKQKEFVKSSVACKWNLAEAQQKLGSLALHNSESLDQEHAKAQIAVSELRQREEEWRQKEEALVQREKMCLWSMDAISKDVFNKSFINQDKRKDTEDEDKSESFMQKYEQKIRHFGMLSRWDDSQRFLSDHPYLVCEETAKYLILWCFHLEAEKKGALMEQIAHQAVVMQFIMEMAKNCNVDPRGCFRLFFQKAKAEEEGYFEAFKNELEAFKSRVRLYSQSQSFQPMTVQNHVPHSGVGSIGLLESLPQNPDYLQYSINTALCSLNSVVHKEDDEPKMMDTV</sequence>
<dbReference type="EMBL" id="CR859131">
    <property type="protein sequence ID" value="CAH91323.1"/>
    <property type="molecule type" value="mRNA"/>
</dbReference>
<dbReference type="RefSeq" id="NP_001125782.1">
    <property type="nucleotide sequence ID" value="NM_001132310.1"/>
</dbReference>
<dbReference type="SMR" id="Q5RA87"/>
<dbReference type="FunCoup" id="Q5RA87">
    <property type="interactions" value="993"/>
</dbReference>
<dbReference type="STRING" id="9601.ENSPPYP00000021554"/>
<dbReference type="Ensembl" id="ENSPPYT00000057629.1">
    <property type="protein sequence ID" value="ENSPPYP00000040429.1"/>
    <property type="gene ID" value="ENSPPYG00000019246.3"/>
</dbReference>
<dbReference type="GeneID" id="100172709"/>
<dbReference type="KEGG" id="pon:100172709"/>
<dbReference type="CTD" id="55664"/>
<dbReference type="eggNOG" id="KOG2260">
    <property type="taxonomic scope" value="Eukaryota"/>
</dbReference>
<dbReference type="GeneTree" id="ENSGT00390000013443"/>
<dbReference type="HOGENOM" id="CLU_046495_1_0_1"/>
<dbReference type="InParanoid" id="Q5RA87"/>
<dbReference type="OMA" id="YAAKCRN"/>
<dbReference type="OrthoDB" id="440202at2759"/>
<dbReference type="Proteomes" id="UP000001595">
    <property type="component" value="Chromosome 9"/>
</dbReference>
<dbReference type="GO" id="GO:0005829">
    <property type="term" value="C:cytosol"/>
    <property type="evidence" value="ECO:0007669"/>
    <property type="project" value="Ensembl"/>
</dbReference>
<dbReference type="GO" id="GO:0031072">
    <property type="term" value="F:heat shock protein binding"/>
    <property type="evidence" value="ECO:0007669"/>
    <property type="project" value="TreeGrafter"/>
</dbReference>
<dbReference type="GO" id="GO:0051087">
    <property type="term" value="F:protein-folding chaperone binding"/>
    <property type="evidence" value="ECO:0007669"/>
    <property type="project" value="TreeGrafter"/>
</dbReference>
<dbReference type="GO" id="GO:0051082">
    <property type="term" value="F:unfolded protein binding"/>
    <property type="evidence" value="ECO:0007669"/>
    <property type="project" value="TreeGrafter"/>
</dbReference>
<dbReference type="GO" id="GO:0006457">
    <property type="term" value="P:protein folding"/>
    <property type="evidence" value="ECO:0007669"/>
    <property type="project" value="TreeGrafter"/>
</dbReference>
<dbReference type="GO" id="GO:0050821">
    <property type="term" value="P:protein stabilization"/>
    <property type="evidence" value="ECO:0007669"/>
    <property type="project" value="TreeGrafter"/>
</dbReference>
<dbReference type="FunFam" id="1.20.58.610:FF:000001">
    <property type="entry name" value="Hsp90 co-chaperone Cdc37-like 1"/>
    <property type="match status" value="1"/>
</dbReference>
<dbReference type="Gene3D" id="1.20.58.610">
    <property type="entry name" value="Cdc37, Hsp90 binding domain"/>
    <property type="match status" value="1"/>
</dbReference>
<dbReference type="InterPro" id="IPR004918">
    <property type="entry name" value="Cdc37"/>
</dbReference>
<dbReference type="InterPro" id="IPR013874">
    <property type="entry name" value="Cdc37_Hsp90-bd"/>
</dbReference>
<dbReference type="InterPro" id="IPR038189">
    <property type="entry name" value="Cdc37_Hsp90-bd_sf"/>
</dbReference>
<dbReference type="PANTHER" id="PTHR12800">
    <property type="entry name" value="CDC37-RELATED"/>
    <property type="match status" value="1"/>
</dbReference>
<dbReference type="PANTHER" id="PTHR12800:SF2">
    <property type="entry name" value="HSP90 CO-CHAPERONE CDC37-LIKE 1"/>
    <property type="match status" value="1"/>
</dbReference>
<dbReference type="Pfam" id="PF08565">
    <property type="entry name" value="CDC37_M"/>
    <property type="match status" value="1"/>
</dbReference>
<dbReference type="SMART" id="SM01070">
    <property type="entry name" value="CDC37_M"/>
    <property type="match status" value="1"/>
</dbReference>
<dbReference type="SUPFAM" id="SSF101391">
    <property type="entry name" value="Hsp90 co-chaperone CDC37"/>
    <property type="match status" value="1"/>
</dbReference>
<feature type="chain" id="PRO_0000318523" description="Hsp90 co-chaperone Cdc37-like 1">
    <location>
        <begin position="1"/>
        <end position="337"/>
    </location>
</feature>
<feature type="region of interest" description="Disordered" evidence="4">
    <location>
        <begin position="1"/>
        <end position="42"/>
    </location>
</feature>
<feature type="region of interest" description="Self-association" evidence="1">
    <location>
        <begin position="2"/>
        <end position="171"/>
    </location>
</feature>
<feature type="region of interest" description="Self-association and interaction with Hsp90" evidence="1">
    <location>
        <begin position="147"/>
        <end position="277"/>
    </location>
</feature>
<feature type="region of interest" description="Interaction with Hsp70" evidence="1">
    <location>
        <begin position="267"/>
        <end position="337"/>
    </location>
</feature>
<feature type="region of interest" description="Required for interaction with STIP1" evidence="1">
    <location>
        <begin position="278"/>
        <end position="337"/>
    </location>
</feature>
<feature type="coiled-coil region" evidence="3">
    <location>
        <begin position="85"/>
        <end position="122"/>
    </location>
</feature>
<feature type="compositionally biased region" description="Pro residues" evidence="4">
    <location>
        <begin position="1"/>
        <end position="11"/>
    </location>
</feature>
<feature type="modified residue" description="Phosphoserine" evidence="2">
    <location>
        <position position="32"/>
    </location>
</feature>
<feature type="modified residue" description="Phosphoserine" evidence="2">
    <location>
        <position position="88"/>
    </location>
</feature>